<proteinExistence type="evidence at transcript level"/>
<dbReference type="EMBL" id="D87840">
    <property type="protein sequence ID" value="BAA25260.1"/>
    <property type="molecule type" value="mRNA"/>
</dbReference>
<dbReference type="RefSeq" id="NP_062190.1">
    <property type="nucleotide sequence ID" value="NM_019317.1"/>
</dbReference>
<dbReference type="SMR" id="O70540"/>
<dbReference type="FunCoup" id="O70540">
    <property type="interactions" value="221"/>
</dbReference>
<dbReference type="STRING" id="10116.ENSRNOP00000010939"/>
<dbReference type="GlyCosmos" id="O70540">
    <property type="glycosylation" value="1 site, No reported glycans"/>
</dbReference>
<dbReference type="GlyGen" id="O70540">
    <property type="glycosylation" value="2 sites"/>
</dbReference>
<dbReference type="PhosphoSitePlus" id="O70540"/>
<dbReference type="PaxDb" id="10116-ENSRNOP00000010939"/>
<dbReference type="Ensembl" id="ENSRNOT00000010938.3">
    <property type="protein sequence ID" value="ENSRNOP00000010939.1"/>
    <property type="gene ID" value="ENSRNOG00000008217.5"/>
</dbReference>
<dbReference type="GeneID" id="54266"/>
<dbReference type="KEGG" id="rno:54266"/>
<dbReference type="UCSC" id="RGD:3029">
    <property type="organism name" value="rat"/>
</dbReference>
<dbReference type="AGR" id="RGD:3029"/>
<dbReference type="CTD" id="8174"/>
<dbReference type="RGD" id="3029">
    <property type="gene designation" value="Madcam1"/>
</dbReference>
<dbReference type="eggNOG" id="ENOG502SR0W">
    <property type="taxonomic scope" value="Eukaryota"/>
</dbReference>
<dbReference type="GeneTree" id="ENSGT00510000049549"/>
<dbReference type="HOGENOM" id="CLU_056743_0_0_1"/>
<dbReference type="InParanoid" id="O70540"/>
<dbReference type="OMA" id="RALRIEC"/>
<dbReference type="OrthoDB" id="9907246at2759"/>
<dbReference type="PhylomeDB" id="O70540"/>
<dbReference type="TreeFam" id="TF337571"/>
<dbReference type="Reactome" id="R-RNO-198933">
    <property type="pathway name" value="Immunoregulatory interactions between a Lymphoid and a non-Lymphoid cell"/>
</dbReference>
<dbReference type="Reactome" id="R-RNO-216083">
    <property type="pathway name" value="Integrin cell surface interactions"/>
</dbReference>
<dbReference type="PRO" id="PR:O70540"/>
<dbReference type="Proteomes" id="UP000002494">
    <property type="component" value="Chromosome 7"/>
</dbReference>
<dbReference type="Bgee" id="ENSRNOG00000008217">
    <property type="expression patterns" value="Expressed in colon and 12 other cell types or tissues"/>
</dbReference>
<dbReference type="GO" id="GO:0005886">
    <property type="term" value="C:plasma membrane"/>
    <property type="evidence" value="ECO:0007669"/>
    <property type="project" value="GOC"/>
</dbReference>
<dbReference type="GO" id="GO:0098640">
    <property type="term" value="F:integrin binding involved in cell-matrix adhesion"/>
    <property type="evidence" value="ECO:0000266"/>
    <property type="project" value="RGD"/>
</dbReference>
<dbReference type="GO" id="GO:0007155">
    <property type="term" value="P:cell adhesion"/>
    <property type="evidence" value="ECO:0000314"/>
    <property type="project" value="RGD"/>
</dbReference>
<dbReference type="GO" id="GO:0007160">
    <property type="term" value="P:cell-matrix adhesion"/>
    <property type="evidence" value="ECO:0000266"/>
    <property type="project" value="RGD"/>
</dbReference>
<dbReference type="GO" id="GO:0034113">
    <property type="term" value="P:heterotypic cell-cell adhesion"/>
    <property type="evidence" value="ECO:0000266"/>
    <property type="project" value="RGD"/>
</dbReference>
<dbReference type="GO" id="GO:0007229">
    <property type="term" value="P:integrin-mediated signaling pathway"/>
    <property type="evidence" value="ECO:0000266"/>
    <property type="project" value="RGD"/>
</dbReference>
<dbReference type="GO" id="GO:0030216">
    <property type="term" value="P:keratinocyte differentiation"/>
    <property type="evidence" value="ECO:0000266"/>
    <property type="project" value="RGD"/>
</dbReference>
<dbReference type="GO" id="GO:0050900">
    <property type="term" value="P:leukocyte migration"/>
    <property type="evidence" value="ECO:0000266"/>
    <property type="project" value="RGD"/>
</dbReference>
<dbReference type="GO" id="GO:0050901">
    <property type="term" value="P:leukocyte tethering or rolling"/>
    <property type="evidence" value="ECO:0000266"/>
    <property type="project" value="RGD"/>
</dbReference>
<dbReference type="GO" id="GO:0002687">
    <property type="term" value="P:positive regulation of leukocyte migration"/>
    <property type="evidence" value="ECO:0000315"/>
    <property type="project" value="RGD"/>
</dbReference>
<dbReference type="GO" id="GO:2000403">
    <property type="term" value="P:positive regulation of lymphocyte migration"/>
    <property type="evidence" value="ECO:0007669"/>
    <property type="project" value="InterPro"/>
</dbReference>
<dbReference type="GO" id="GO:0043113">
    <property type="term" value="P:receptor clustering"/>
    <property type="evidence" value="ECO:0000266"/>
    <property type="project" value="RGD"/>
</dbReference>
<dbReference type="FunFam" id="2.60.40.10:FF:000194">
    <property type="entry name" value="Intercellular adhesion molecule 1"/>
    <property type="match status" value="1"/>
</dbReference>
<dbReference type="FunFam" id="2.60.40.10:FF:000933">
    <property type="entry name" value="Mucosal addressin cell adhesion molecule 1"/>
    <property type="match status" value="1"/>
</dbReference>
<dbReference type="Gene3D" id="2.60.40.10">
    <property type="entry name" value="Immunoglobulins"/>
    <property type="match status" value="2"/>
</dbReference>
<dbReference type="InterPro" id="IPR015169">
    <property type="entry name" value="Adhes-Ig-like"/>
</dbReference>
<dbReference type="InterPro" id="IPR003987">
    <property type="entry name" value="ICAM_VCAM_N"/>
</dbReference>
<dbReference type="InterPro" id="IPR036179">
    <property type="entry name" value="Ig-like_dom_sf"/>
</dbReference>
<dbReference type="InterPro" id="IPR013783">
    <property type="entry name" value="Ig-like_fold"/>
</dbReference>
<dbReference type="InterPro" id="IPR037413">
    <property type="entry name" value="MADCAM1"/>
</dbReference>
<dbReference type="PANTHER" id="PTHR14162:SF1">
    <property type="entry name" value="MUCOSAL ADDRESSIN CELL ADHESION MOLECULE 1"/>
    <property type="match status" value="1"/>
</dbReference>
<dbReference type="PANTHER" id="PTHR14162">
    <property type="entry name" value="MUCOSAL ADDRESSIN CELL ADHESION MOLECULE-1"/>
    <property type="match status" value="1"/>
</dbReference>
<dbReference type="Pfam" id="PF09085">
    <property type="entry name" value="Adhes-Ig_like"/>
    <property type="match status" value="1"/>
</dbReference>
<dbReference type="PRINTS" id="PR01472">
    <property type="entry name" value="ICAMVCAM1"/>
</dbReference>
<dbReference type="SUPFAM" id="SSF48726">
    <property type="entry name" value="Immunoglobulin"/>
    <property type="match status" value="2"/>
</dbReference>
<evidence type="ECO:0000250" key="1"/>
<evidence type="ECO:0000250" key="2">
    <source>
        <dbReference type="UniProtKB" id="Q13477"/>
    </source>
</evidence>
<evidence type="ECO:0000255" key="3"/>
<evidence type="ECO:0000305" key="4"/>
<organism>
    <name type="scientific">Rattus norvegicus</name>
    <name type="common">Rat</name>
    <dbReference type="NCBI Taxonomy" id="10116"/>
    <lineage>
        <taxon>Eukaryota</taxon>
        <taxon>Metazoa</taxon>
        <taxon>Chordata</taxon>
        <taxon>Craniata</taxon>
        <taxon>Vertebrata</taxon>
        <taxon>Euteleostomi</taxon>
        <taxon>Mammalia</taxon>
        <taxon>Eutheria</taxon>
        <taxon>Euarchontoglires</taxon>
        <taxon>Glires</taxon>
        <taxon>Rodentia</taxon>
        <taxon>Myomorpha</taxon>
        <taxon>Muroidea</taxon>
        <taxon>Muridae</taxon>
        <taxon>Murinae</taxon>
        <taxon>Rattus</taxon>
    </lineage>
</organism>
<accession>O70540</accession>
<sequence length="394" mass="42507">MEPILALLLALGPFQLSRGQSFQVNPPEPEVAVAMGTSLQINCSMSCDKDIARVHWHGLDTNLGNVQTLPGSRVLSVRGMLSDTGTRVCVGSCGSRSFQHSVKILVYAFPDQLEVTPEFLVPGRDQVVSCTAHNIWPAGPDSLSFALLRGEQSLEGAQALETEQEEEMQETEGTPLFQVTQRWLLPSLGTPALPALYCQVTMQLPKLVLTHRRKIPVLQSQTSPEPPSTTSAKPYILTSSHTTKAVSTGLSSVALPSTPLSSEGPCYPEIHQNPEADWELLCEASCGSGVTVHWTLAPGDLAAYHKREAGAQAWLSVLPLGPIPEGWFQCRMDPGGQVTSLYVTGQVIPNPSSMVALWIGSLVLGLLALAFLAYCLWKRYRPGPLPDSSSCTLL</sequence>
<feature type="signal peptide" evidence="3">
    <location>
        <begin position="1"/>
        <end position="19"/>
    </location>
</feature>
<feature type="chain" id="PRO_0000014855" description="Mucosal addressin cell adhesion molecule 1">
    <location>
        <begin position="20"/>
        <end position="394"/>
    </location>
</feature>
<feature type="topological domain" description="Extracellular" evidence="3">
    <location>
        <begin position="20"/>
        <end position="353"/>
    </location>
</feature>
<feature type="transmembrane region" description="Helical" evidence="3">
    <location>
        <begin position="354"/>
        <end position="374"/>
    </location>
</feature>
<feature type="topological domain" description="Cytoplasmic" evidence="3">
    <location>
        <begin position="375"/>
        <end position="394"/>
    </location>
</feature>
<feature type="domain" description="Ig-like 1">
    <location>
        <begin position="20"/>
        <end position="107"/>
    </location>
</feature>
<feature type="domain" description="Ig-like 2">
    <location>
        <begin position="108"/>
        <end position="225"/>
    </location>
</feature>
<feature type="domain" description="Ig-like 3">
    <location>
        <begin position="256"/>
        <end position="345"/>
    </location>
</feature>
<feature type="region of interest" description="Mucin-like">
    <location>
        <begin position="219"/>
        <end position="255"/>
    </location>
</feature>
<feature type="glycosylation site" description="N-linked (GlcNAc...) asparagine" evidence="3">
    <location>
        <position position="42"/>
    </location>
</feature>
<feature type="disulfide bond" evidence="2">
    <location>
        <begin position="43"/>
        <end position="89"/>
    </location>
</feature>
<feature type="disulfide bond" evidence="2">
    <location>
        <begin position="47"/>
        <end position="93"/>
    </location>
</feature>
<feature type="disulfide bond" evidence="2">
    <location>
        <begin position="130"/>
        <end position="198"/>
    </location>
</feature>
<feature type="disulfide bond" evidence="3">
    <location>
        <begin position="282"/>
        <end position="330"/>
    </location>
</feature>
<gene>
    <name type="primary">Madcam1</name>
</gene>
<name>MADCA_RAT</name>
<protein>
    <recommendedName>
        <fullName>Mucosal addressin cell adhesion molecule 1</fullName>
        <shortName>MAdCAM-1</shortName>
        <shortName>rMAdCAM-1</shortName>
    </recommendedName>
</protein>
<reference key="1">
    <citation type="journal article" date="1998" name="Biochim. Biophys. Acta">
        <title>Cloning and characterization of the rat MAdCAM-1 cDNA and gene.</title>
        <authorList>
            <person name="Iizuka T."/>
            <person name="Koike R."/>
            <person name="Miyasaka N."/>
            <person name="Miyasaka M."/>
            <person name="Watanabe T."/>
        </authorList>
    </citation>
    <scope>NUCLEOTIDE SEQUENCE [MRNA]</scope>
    <source>
        <strain>WKAH</strain>
        <tissue>Lymph node</tissue>
    </source>
</reference>
<keyword id="KW-0130">Cell adhesion</keyword>
<keyword id="KW-1015">Disulfide bond</keyword>
<keyword id="KW-0325">Glycoprotein</keyword>
<keyword id="KW-0393">Immunoglobulin domain</keyword>
<keyword id="KW-0472">Membrane</keyword>
<keyword id="KW-1185">Reference proteome</keyword>
<keyword id="KW-0677">Repeat</keyword>
<keyword id="KW-0732">Signal</keyword>
<keyword id="KW-0812">Transmembrane</keyword>
<keyword id="KW-1133">Transmembrane helix</keyword>
<comment type="function">
    <text evidence="1">Cell adhesion leukocyte receptor expressed by mucosal venules, helps to direct lymphocyte traffic into mucosal tissues including the Peyer patches and the intestinal lamina propria. It can bind both the integrin alpha-4/beta-7 and L-selectin, regulating both the passage and retention of leukocytes (By similarity).</text>
</comment>
<comment type="subunit">
    <text evidence="4">Homodimer.</text>
</comment>
<comment type="subcellular location">
    <subcellularLocation>
        <location>Membrane</location>
        <topology>Single-pass type I membrane protein</topology>
    </subcellularLocation>
</comment>
<comment type="tissue specificity">
    <text>Detected in Peyer patches and mesenteric lymph nodes but not in spleen.</text>
</comment>